<accession>Q6GLW8</accession>
<evidence type="ECO:0000250" key="1">
    <source>
        <dbReference type="UniProtKB" id="Q8BUE4"/>
    </source>
</evidence>
<evidence type="ECO:0000250" key="2">
    <source>
        <dbReference type="UniProtKB" id="Q9BRQ8"/>
    </source>
</evidence>
<evidence type="ECO:0000255" key="3"/>
<evidence type="ECO:0000305" key="4"/>
<gene>
    <name type="primary">aifm2</name>
</gene>
<organism>
    <name type="scientific">Xenopus laevis</name>
    <name type="common">African clawed frog</name>
    <dbReference type="NCBI Taxonomy" id="8355"/>
    <lineage>
        <taxon>Eukaryota</taxon>
        <taxon>Metazoa</taxon>
        <taxon>Chordata</taxon>
        <taxon>Craniata</taxon>
        <taxon>Vertebrata</taxon>
        <taxon>Euteleostomi</taxon>
        <taxon>Amphibia</taxon>
        <taxon>Batrachia</taxon>
        <taxon>Anura</taxon>
        <taxon>Pipoidea</taxon>
        <taxon>Pipidae</taxon>
        <taxon>Xenopodinae</taxon>
        <taxon>Xenopus</taxon>
        <taxon>Xenopus</taxon>
    </lineage>
</organism>
<dbReference type="EC" id="1.6.5.-" evidence="2"/>
<dbReference type="EMBL" id="BC074328">
    <property type="protein sequence ID" value="AAH74328.1"/>
    <property type="molecule type" value="mRNA"/>
</dbReference>
<dbReference type="RefSeq" id="NP_001091397.1">
    <property type="nucleotide sequence ID" value="NM_001097928.1"/>
</dbReference>
<dbReference type="SMR" id="Q6GLW8"/>
<dbReference type="DNASU" id="100049086"/>
<dbReference type="GeneID" id="100049086"/>
<dbReference type="KEGG" id="xla:100049086"/>
<dbReference type="AGR" id="Xenbase:XB-GENE-1003379"/>
<dbReference type="CTD" id="100049086"/>
<dbReference type="Xenbase" id="XB-GENE-1003379">
    <property type="gene designation" value="aifm2.S"/>
</dbReference>
<dbReference type="OMA" id="TWEIAPP"/>
<dbReference type="OrthoDB" id="3244603at2759"/>
<dbReference type="Proteomes" id="UP000186698">
    <property type="component" value="Chromosome 7S"/>
</dbReference>
<dbReference type="Bgee" id="100049086">
    <property type="expression patterns" value="Expressed in muscle tissue and 18 other cell types or tissues"/>
</dbReference>
<dbReference type="GO" id="GO:0005737">
    <property type="term" value="C:cytoplasm"/>
    <property type="evidence" value="ECO:0000318"/>
    <property type="project" value="GO_Central"/>
</dbReference>
<dbReference type="GO" id="GO:0005811">
    <property type="term" value="C:lipid droplet"/>
    <property type="evidence" value="ECO:0007669"/>
    <property type="project" value="UniProtKB-SubCell"/>
</dbReference>
<dbReference type="GO" id="GO:0031966">
    <property type="term" value="C:mitochondrial membrane"/>
    <property type="evidence" value="ECO:0007669"/>
    <property type="project" value="UniProtKB-SubCell"/>
</dbReference>
<dbReference type="GO" id="GO:0005739">
    <property type="term" value="C:mitochondrion"/>
    <property type="evidence" value="ECO:0000318"/>
    <property type="project" value="GO_Central"/>
</dbReference>
<dbReference type="GO" id="GO:0005634">
    <property type="term" value="C:nucleus"/>
    <property type="evidence" value="ECO:0007669"/>
    <property type="project" value="UniProtKB-SubCell"/>
</dbReference>
<dbReference type="GO" id="GO:0005886">
    <property type="term" value="C:plasma membrane"/>
    <property type="evidence" value="ECO:0007669"/>
    <property type="project" value="UniProtKB-SubCell"/>
</dbReference>
<dbReference type="GO" id="GO:0004174">
    <property type="term" value="F:electron-transferring-flavoprotein dehydrogenase activity"/>
    <property type="evidence" value="ECO:0000318"/>
    <property type="project" value="GO_Central"/>
</dbReference>
<dbReference type="GO" id="GO:0050660">
    <property type="term" value="F:flavin adenine dinucleotide binding"/>
    <property type="evidence" value="ECO:0000318"/>
    <property type="project" value="GO_Central"/>
</dbReference>
<dbReference type="GO" id="GO:0016655">
    <property type="term" value="F:oxidoreductase activity, acting on NAD(P)H, quinone or similar compound as acceptor"/>
    <property type="evidence" value="ECO:0000250"/>
    <property type="project" value="UniProtKB"/>
</dbReference>
<dbReference type="GO" id="GO:0008637">
    <property type="term" value="P:apoptotic mitochondrial changes"/>
    <property type="evidence" value="ECO:0000318"/>
    <property type="project" value="GO_Central"/>
</dbReference>
<dbReference type="GO" id="GO:0043065">
    <property type="term" value="P:positive regulation of apoptotic process"/>
    <property type="evidence" value="ECO:0000318"/>
    <property type="project" value="GO_Central"/>
</dbReference>
<dbReference type="GO" id="GO:0042373">
    <property type="term" value="P:vitamin K metabolic process"/>
    <property type="evidence" value="ECO:0000250"/>
    <property type="project" value="UniProtKB"/>
</dbReference>
<dbReference type="FunFam" id="3.50.50.100:FF:000003">
    <property type="entry name" value="Apoptosis-inducing factor, mitochondrion-associated, 2"/>
    <property type="match status" value="1"/>
</dbReference>
<dbReference type="Gene3D" id="3.50.50.100">
    <property type="match status" value="1"/>
</dbReference>
<dbReference type="InterPro" id="IPR036188">
    <property type="entry name" value="FAD/NAD-bd_sf"/>
</dbReference>
<dbReference type="InterPro" id="IPR023753">
    <property type="entry name" value="FAD/NAD-binding_dom"/>
</dbReference>
<dbReference type="PANTHER" id="PTHR43735">
    <property type="entry name" value="APOPTOSIS-INDUCING FACTOR 1"/>
    <property type="match status" value="1"/>
</dbReference>
<dbReference type="PANTHER" id="PTHR43735:SF3">
    <property type="entry name" value="FERROPTOSIS SUPPRESSOR PROTEIN 1"/>
    <property type="match status" value="1"/>
</dbReference>
<dbReference type="Pfam" id="PF07992">
    <property type="entry name" value="Pyr_redox_2"/>
    <property type="match status" value="1"/>
</dbReference>
<dbReference type="PRINTS" id="PR00368">
    <property type="entry name" value="FADPNR"/>
</dbReference>
<dbReference type="PRINTS" id="PR00469">
    <property type="entry name" value="PNDRDTASEII"/>
</dbReference>
<dbReference type="SUPFAM" id="SSF51905">
    <property type="entry name" value="FAD/NAD(P)-binding domain"/>
    <property type="match status" value="1"/>
</dbReference>
<keyword id="KW-0007">Acetylation</keyword>
<keyword id="KW-0053">Apoptosis</keyword>
<keyword id="KW-1003">Cell membrane</keyword>
<keyword id="KW-0963">Cytoplasm</keyword>
<keyword id="KW-0274">FAD</keyword>
<keyword id="KW-0285">Flavoprotein</keyword>
<keyword id="KW-0551">Lipid droplet</keyword>
<keyword id="KW-0449">Lipoprotein</keyword>
<keyword id="KW-0472">Membrane</keyword>
<keyword id="KW-0496">Mitochondrion</keyword>
<keyword id="KW-0519">Myristate</keyword>
<keyword id="KW-0539">Nucleus</keyword>
<keyword id="KW-0560">Oxidoreductase</keyword>
<keyword id="KW-1185">Reference proteome</keyword>
<keyword id="KW-0812">Transmembrane</keyword>
<keyword id="KW-1133">Transmembrane helix</keyword>
<keyword id="KW-0832">Ubl conjugation</keyword>
<comment type="function">
    <text evidence="2">A NAD(P)H-dependent oxidoreductase that acts as a key inhibitor of ferroptosis. At the plasma membrane, catalyzes reduction of coenzyme Q/ubiquinone-10 to ubiquinol-10, a lipophilic radical-trapping antioxidant that prevents lipid oxidative damage and consequently ferroptosis. Acts in parallel to GPX4 to suppress phospholipid peroxidation and ferroptosis. This anti-ferroptotic function is independent of cellular glutathione levels. Also acts as a potent radical-trapping antioxidant by mediating warfarin-resistant vitamin K reduction in the canonical vitamin K cycle: catalyzes NAD(P)H-dependent reduction of vitamin K (phylloquinone, menaquinone-4 and menadione) to hydroquinone forms. Hydroquinones act as potent radical-trapping antioxidants inhibitor of phospholipid peroxidation and ferroptosis. May play a role in mitochondrial stress signaling. Upon oxidative stress, associates with the lipid peroxidation end product 4-hydroxy-2-nonenal (HNE) forming a lipid adduct devoid of oxidoreductase activity, which then translocates from mitochondria into the nucleus triggering DNA damage and cell death.</text>
</comment>
<comment type="catalytic activity">
    <reaction evidence="2">
        <text>ubiquinone-10 + NADH + H(+) = ubiquinol-10 + NAD(+)</text>
        <dbReference type="Rhea" id="RHEA:61984"/>
        <dbReference type="ChEBI" id="CHEBI:15378"/>
        <dbReference type="ChEBI" id="CHEBI:46245"/>
        <dbReference type="ChEBI" id="CHEBI:57540"/>
        <dbReference type="ChEBI" id="CHEBI:57945"/>
        <dbReference type="ChEBI" id="CHEBI:64183"/>
    </reaction>
    <physiologicalReaction direction="left-to-right" evidence="2">
        <dbReference type="Rhea" id="RHEA:61985"/>
    </physiologicalReaction>
</comment>
<comment type="catalytic activity">
    <reaction evidence="2">
        <text>phylloquinone + NADH + H(+) = phylloquinol + NAD(+)</text>
        <dbReference type="Rhea" id="RHEA:74075"/>
        <dbReference type="ChEBI" id="CHEBI:15378"/>
        <dbReference type="ChEBI" id="CHEBI:18067"/>
        <dbReference type="ChEBI" id="CHEBI:28433"/>
        <dbReference type="ChEBI" id="CHEBI:57540"/>
        <dbReference type="ChEBI" id="CHEBI:57945"/>
    </reaction>
    <physiologicalReaction direction="left-to-right" evidence="2">
        <dbReference type="Rhea" id="RHEA:74076"/>
    </physiologicalReaction>
</comment>
<comment type="catalytic activity">
    <reaction evidence="2">
        <text>menaquinone-4 + NADH + H(+) = menaquinol-4 + NAD(+)</text>
        <dbReference type="Rhea" id="RHEA:74079"/>
        <dbReference type="ChEBI" id="CHEBI:15378"/>
        <dbReference type="ChEBI" id="CHEBI:57540"/>
        <dbReference type="ChEBI" id="CHEBI:57945"/>
        <dbReference type="ChEBI" id="CHEBI:78277"/>
        <dbReference type="ChEBI" id="CHEBI:193091"/>
    </reaction>
    <physiologicalReaction direction="left-to-right" evidence="2">
        <dbReference type="Rhea" id="RHEA:74080"/>
    </physiologicalReaction>
</comment>
<comment type="catalytic activity">
    <reaction evidence="2">
        <text>menadione + NADH + H(+) = menadiol + NAD(+)</text>
        <dbReference type="Rhea" id="RHEA:69695"/>
        <dbReference type="ChEBI" id="CHEBI:6746"/>
        <dbReference type="ChEBI" id="CHEBI:15378"/>
        <dbReference type="ChEBI" id="CHEBI:28869"/>
        <dbReference type="ChEBI" id="CHEBI:57540"/>
        <dbReference type="ChEBI" id="CHEBI:57945"/>
    </reaction>
    <physiologicalReaction direction="left-to-right" evidence="2">
        <dbReference type="Rhea" id="RHEA:69696"/>
    </physiologicalReaction>
</comment>
<comment type="cofactor">
    <cofactor evidence="2">
        <name>6-hydroxy-FAD</name>
        <dbReference type="ChEBI" id="CHEBI:60470"/>
    </cofactor>
    <text evidence="2">Binds 6-hydroxy-FAD non-covalently.</text>
</comment>
<comment type="activity regulation">
    <text evidence="1">The modification by 4-hydroxy-2-nonenal (HNE) adduction in mitochondria results in loss of the oxidoreductase activity and activation of a novel function in mitochondrial oxidative stress signaling.</text>
</comment>
<comment type="subcellular location">
    <subcellularLocation>
        <location evidence="2">Lipid droplet</location>
    </subcellularLocation>
    <subcellularLocation>
        <location evidence="2">Cell membrane</location>
        <topology evidence="4">Lipid-anchor</topology>
    </subcellularLocation>
    <subcellularLocation>
        <location evidence="2">Cytoplasm</location>
    </subcellularLocation>
    <subcellularLocation>
        <location evidence="2">Mitochondrion membrane</location>
    </subcellularLocation>
    <subcellularLocation>
        <location evidence="2">Nucleus</location>
    </subcellularLocation>
</comment>
<comment type="PTM">
    <text evidence="2">N-myristoylation at Gly-2 mediates the recruitment to lipid droplets and plasma membrane.</text>
</comment>
<comment type="PTM">
    <text evidence="2">Acetylation at Lys-167 prevents AIFM2 ubiquitination and degradation, thereby inhibiting ferroptosis. KAT2B mediates acetylation at Lys-167, while HDAC3 removes it.</text>
</comment>
<comment type="PTM">
    <text evidence="2">Ubiquitinated. AIFM2 undergoes 'Lys-29'-ubiquitination and proteasomal degradation, which is inhibited by acetylation at Lys-167.</text>
</comment>
<comment type="similarity">
    <text evidence="4">Belongs to the FAD-dependent oxidoreductase family.</text>
</comment>
<reference key="1">
    <citation type="submission" date="2004-06" db="EMBL/GenBank/DDBJ databases">
        <authorList>
            <consortium name="NIH - Xenopus Gene Collection (XGC) project"/>
        </authorList>
    </citation>
    <scope>NUCLEOTIDE SEQUENCE [LARGE SCALE MRNA]</scope>
    <source>
        <tissue>Brain</tissue>
    </source>
</reference>
<feature type="initiator methionine" description="Removed" evidence="2">
    <location>
        <position position="1"/>
    </location>
</feature>
<feature type="chain" id="PRO_0000366945" description="Ferroptosis suppressor protein 1">
    <location>
        <begin position="2"/>
        <end position="374"/>
    </location>
</feature>
<feature type="transmembrane region" description="Helical" evidence="3">
    <location>
        <begin position="13"/>
        <end position="35"/>
    </location>
</feature>
<feature type="binding site" evidence="3">
    <location>
        <begin position="17"/>
        <end position="21"/>
    </location>
    <ligand>
        <name>6-hydroxy-FAD</name>
        <dbReference type="ChEBI" id="CHEBI:60470"/>
    </ligand>
</feature>
<feature type="binding site" evidence="3">
    <location>
        <position position="53"/>
    </location>
    <ligand>
        <name>6-hydroxy-FAD</name>
        <dbReference type="ChEBI" id="CHEBI:60470"/>
    </ligand>
</feature>
<feature type="binding site" evidence="3">
    <location>
        <position position="81"/>
    </location>
    <ligand>
        <name>6-hydroxy-FAD</name>
        <dbReference type="ChEBI" id="CHEBI:60470"/>
    </ligand>
</feature>
<feature type="binding site" evidence="3">
    <location>
        <position position="285"/>
    </location>
    <ligand>
        <name>6-hydroxy-FAD</name>
        <dbReference type="ChEBI" id="CHEBI:60470"/>
    </ligand>
</feature>
<feature type="site" description="4-hydroxy-2-nonenal adduction" evidence="1">
    <location>
        <position position="173"/>
    </location>
</feature>
<feature type="modified residue" description="N6-acetyllysine" evidence="2">
    <location>
        <position position="167"/>
    </location>
</feature>
<feature type="lipid moiety-binding region" description="N-myristoyl glycine" evidence="2">
    <location>
        <position position="2"/>
    </location>
</feature>
<protein>
    <recommendedName>
        <fullName evidence="2">Ferroptosis suppressor protein 1</fullName>
        <shortName evidence="2">FSP1</shortName>
        <ecNumber evidence="2">1.6.5.-</ecNumber>
    </recommendedName>
    <alternativeName>
        <fullName>Apoptosis-inducing factor homologous mitochondrion-associated inducer of death</fullName>
        <shortName>AMID</shortName>
    </alternativeName>
    <alternativeName>
        <fullName>p53-responsive gene 3 protein</fullName>
    </alternativeName>
</protein>
<sequence>MGSKVSVEESVRVVIVGGGFAGIAAASQLKSFGIPFLLVDMKDAFHHNVAALRACVESGFARKTFISYKDSFHDSFKQGKVVGINLQTQLVILESNEELSFSHLIIATGSNGPFPGKFNEVISKDQAIQIYENLVEEIQKAKHVVVVGGGSAGVEMAAEVKTDYPEKEVTLIHSKIALADVQLQPSVRRTVKEILLRKGVRLILAQKVTNLDQVTPNVAQENMELQLDKDSEVVNCDLVLCCIGLKVSSSSYRSALGDKMAEDGSLIVNDYLQVQGHENVYAVGDCAYINEPKMAYYAGIHARVAATNVRNSLIGKSLKSYIPGALSMLLSMGRNDGVGQFNGYYLGRCFVTMAKSRDIFVSKSWKEMGQTMPR</sequence>
<proteinExistence type="evidence at transcript level"/>
<name>FSP1_XENLA</name>